<keyword id="KW-0963">Cytoplasm</keyword>
<keyword id="KW-0342">GTP-binding</keyword>
<keyword id="KW-0378">Hydrolase</keyword>
<keyword id="KW-0460">Magnesium</keyword>
<keyword id="KW-0479">Metal-binding</keyword>
<keyword id="KW-0547">Nucleotide-binding</keyword>
<reference key="1">
    <citation type="submission" date="2008-10" db="EMBL/GenBank/DDBJ databases">
        <title>Complete sequence of Desulfovibrio vulgaris str. 'Miyazaki F'.</title>
        <authorList>
            <person name="Lucas S."/>
            <person name="Copeland A."/>
            <person name="Lapidus A."/>
            <person name="Glavina del Rio T."/>
            <person name="Dalin E."/>
            <person name="Tice H."/>
            <person name="Bruce D."/>
            <person name="Goodwin L."/>
            <person name="Pitluck S."/>
            <person name="Sims D."/>
            <person name="Brettin T."/>
            <person name="Detter J.C."/>
            <person name="Han C."/>
            <person name="Larimer F."/>
            <person name="Land M."/>
            <person name="Hauser L."/>
            <person name="Kyrpides N."/>
            <person name="Mikhailova N."/>
            <person name="Hazen T.C."/>
            <person name="Richardson P."/>
        </authorList>
    </citation>
    <scope>NUCLEOTIDE SEQUENCE [LARGE SCALE GENOMIC DNA]</scope>
    <source>
        <strain>DSM 19637 / Miyazaki F</strain>
    </source>
</reference>
<name>OBG_NITV9</name>
<sequence length="368" mass="40361">MRFVDEATITVRAGNGGNGCVSFRREKFVPRGGPDGGDGGDGGSVILRASNRLLSLYDFRLQRNYEAPNGQGGMGSQCHGRKGDDLTVELPVGTQIYEVTEDGETLLCDLSDPETVFVVAQGGRGGKGNEHFKSSTNRAPRFAQKGETGEVRSLRLELKILADAGLLGLPNAGKSTFISKVSAARPKIAAYPFTTLIPNLGVMIDDADPEQRLVIADIPGLIEGAHTGQGLGHRFLKHVERTRFLVHILSVEDVSLDSPDGPWSGFDLINEELVRFDADLGQRVQLQVVNKIDLRDPEDVQALRDRAAADGRTVHFMSALTGEGVEDVVAEMWRMRDELDIHEALVRLRETEEFDEEESDIEVIWVRE</sequence>
<accession>B8DRN9</accession>
<protein>
    <recommendedName>
        <fullName evidence="1">GTPase Obg</fullName>
        <ecNumber evidence="1">3.6.5.-</ecNumber>
    </recommendedName>
    <alternativeName>
        <fullName evidence="1">GTP-binding protein Obg</fullName>
    </alternativeName>
</protein>
<organism>
    <name type="scientific">Nitratidesulfovibrio vulgaris (strain DSM 19637 / Miyazaki F)</name>
    <name type="common">Desulfovibrio vulgaris</name>
    <dbReference type="NCBI Taxonomy" id="883"/>
    <lineage>
        <taxon>Bacteria</taxon>
        <taxon>Pseudomonadati</taxon>
        <taxon>Thermodesulfobacteriota</taxon>
        <taxon>Desulfovibrionia</taxon>
        <taxon>Desulfovibrionales</taxon>
        <taxon>Desulfovibrionaceae</taxon>
        <taxon>Nitratidesulfovibrio</taxon>
    </lineage>
</organism>
<dbReference type="EC" id="3.6.5.-" evidence="1"/>
<dbReference type="EMBL" id="CP001197">
    <property type="protein sequence ID" value="ACL08326.1"/>
    <property type="molecule type" value="Genomic_DNA"/>
</dbReference>
<dbReference type="SMR" id="B8DRN9"/>
<dbReference type="STRING" id="883.DvMF_1378"/>
<dbReference type="KEGG" id="dvm:DvMF_1378"/>
<dbReference type="eggNOG" id="COG0536">
    <property type="taxonomic scope" value="Bacteria"/>
</dbReference>
<dbReference type="HOGENOM" id="CLU_011747_2_0_7"/>
<dbReference type="OrthoDB" id="9807318at2"/>
<dbReference type="GO" id="GO:0005737">
    <property type="term" value="C:cytoplasm"/>
    <property type="evidence" value="ECO:0007669"/>
    <property type="project" value="UniProtKB-SubCell"/>
</dbReference>
<dbReference type="GO" id="GO:0005525">
    <property type="term" value="F:GTP binding"/>
    <property type="evidence" value="ECO:0007669"/>
    <property type="project" value="UniProtKB-UniRule"/>
</dbReference>
<dbReference type="GO" id="GO:0003924">
    <property type="term" value="F:GTPase activity"/>
    <property type="evidence" value="ECO:0007669"/>
    <property type="project" value="UniProtKB-UniRule"/>
</dbReference>
<dbReference type="GO" id="GO:0000287">
    <property type="term" value="F:magnesium ion binding"/>
    <property type="evidence" value="ECO:0007669"/>
    <property type="project" value="InterPro"/>
</dbReference>
<dbReference type="GO" id="GO:0042254">
    <property type="term" value="P:ribosome biogenesis"/>
    <property type="evidence" value="ECO:0007669"/>
    <property type="project" value="UniProtKB-UniRule"/>
</dbReference>
<dbReference type="CDD" id="cd01898">
    <property type="entry name" value="Obg"/>
    <property type="match status" value="1"/>
</dbReference>
<dbReference type="FunFam" id="2.70.210.12:FF:000001">
    <property type="entry name" value="GTPase Obg"/>
    <property type="match status" value="1"/>
</dbReference>
<dbReference type="Gene3D" id="2.70.210.12">
    <property type="entry name" value="GTP1/OBG domain"/>
    <property type="match status" value="1"/>
</dbReference>
<dbReference type="Gene3D" id="3.40.50.300">
    <property type="entry name" value="P-loop containing nucleotide triphosphate hydrolases"/>
    <property type="match status" value="1"/>
</dbReference>
<dbReference type="HAMAP" id="MF_01454">
    <property type="entry name" value="GTPase_Obg"/>
    <property type="match status" value="1"/>
</dbReference>
<dbReference type="InterPro" id="IPR031167">
    <property type="entry name" value="G_OBG"/>
</dbReference>
<dbReference type="InterPro" id="IPR006073">
    <property type="entry name" value="GTP-bd"/>
</dbReference>
<dbReference type="InterPro" id="IPR014100">
    <property type="entry name" value="GTP-bd_Obg/CgtA"/>
</dbReference>
<dbReference type="InterPro" id="IPR006074">
    <property type="entry name" value="GTP1-OBG_CS"/>
</dbReference>
<dbReference type="InterPro" id="IPR006169">
    <property type="entry name" value="GTP1_OBG_dom"/>
</dbReference>
<dbReference type="InterPro" id="IPR036726">
    <property type="entry name" value="GTP1_OBG_dom_sf"/>
</dbReference>
<dbReference type="InterPro" id="IPR045086">
    <property type="entry name" value="OBG_GTPase"/>
</dbReference>
<dbReference type="InterPro" id="IPR027417">
    <property type="entry name" value="P-loop_NTPase"/>
</dbReference>
<dbReference type="NCBIfam" id="TIGR02729">
    <property type="entry name" value="Obg_CgtA"/>
    <property type="match status" value="1"/>
</dbReference>
<dbReference type="NCBIfam" id="NF008955">
    <property type="entry name" value="PRK12297.1"/>
    <property type="match status" value="1"/>
</dbReference>
<dbReference type="NCBIfam" id="NF008956">
    <property type="entry name" value="PRK12299.1"/>
    <property type="match status" value="1"/>
</dbReference>
<dbReference type="PANTHER" id="PTHR11702">
    <property type="entry name" value="DEVELOPMENTALLY REGULATED GTP-BINDING PROTEIN-RELATED"/>
    <property type="match status" value="1"/>
</dbReference>
<dbReference type="PANTHER" id="PTHR11702:SF31">
    <property type="entry name" value="MITOCHONDRIAL RIBOSOME-ASSOCIATED GTPASE 2"/>
    <property type="match status" value="1"/>
</dbReference>
<dbReference type="Pfam" id="PF01018">
    <property type="entry name" value="GTP1_OBG"/>
    <property type="match status" value="1"/>
</dbReference>
<dbReference type="Pfam" id="PF01926">
    <property type="entry name" value="MMR_HSR1"/>
    <property type="match status" value="1"/>
</dbReference>
<dbReference type="PIRSF" id="PIRSF002401">
    <property type="entry name" value="GTP_bd_Obg/CgtA"/>
    <property type="match status" value="1"/>
</dbReference>
<dbReference type="PRINTS" id="PR00326">
    <property type="entry name" value="GTP1OBG"/>
</dbReference>
<dbReference type="SUPFAM" id="SSF82051">
    <property type="entry name" value="Obg GTP-binding protein N-terminal domain"/>
    <property type="match status" value="1"/>
</dbReference>
<dbReference type="SUPFAM" id="SSF52540">
    <property type="entry name" value="P-loop containing nucleoside triphosphate hydrolases"/>
    <property type="match status" value="1"/>
</dbReference>
<dbReference type="PROSITE" id="PS51710">
    <property type="entry name" value="G_OBG"/>
    <property type="match status" value="1"/>
</dbReference>
<dbReference type="PROSITE" id="PS00905">
    <property type="entry name" value="GTP1_OBG"/>
    <property type="match status" value="1"/>
</dbReference>
<dbReference type="PROSITE" id="PS51883">
    <property type="entry name" value="OBG"/>
    <property type="match status" value="1"/>
</dbReference>
<gene>
    <name evidence="1" type="primary">obg</name>
    <name type="ordered locus">DvMF_1378</name>
</gene>
<comment type="function">
    <text evidence="1">An essential GTPase which binds GTP, GDP and possibly (p)ppGpp with moderate affinity, with high nucleotide exchange rates and a fairly low GTP hydrolysis rate. Plays a role in control of the cell cycle, stress response, ribosome biogenesis and in those bacteria that undergo differentiation, in morphogenesis control.</text>
</comment>
<comment type="cofactor">
    <cofactor evidence="1">
        <name>Mg(2+)</name>
        <dbReference type="ChEBI" id="CHEBI:18420"/>
    </cofactor>
</comment>
<comment type="subunit">
    <text evidence="1">Monomer.</text>
</comment>
<comment type="subcellular location">
    <subcellularLocation>
        <location evidence="1">Cytoplasm</location>
    </subcellularLocation>
</comment>
<comment type="similarity">
    <text evidence="1">Belongs to the TRAFAC class OBG-HflX-like GTPase superfamily. OBG GTPase family.</text>
</comment>
<proteinExistence type="inferred from homology"/>
<evidence type="ECO:0000255" key="1">
    <source>
        <dbReference type="HAMAP-Rule" id="MF_01454"/>
    </source>
</evidence>
<evidence type="ECO:0000255" key="2">
    <source>
        <dbReference type="PROSITE-ProRule" id="PRU01231"/>
    </source>
</evidence>
<feature type="chain" id="PRO_0000385892" description="GTPase Obg">
    <location>
        <begin position="1"/>
        <end position="368"/>
    </location>
</feature>
<feature type="domain" description="Obg" evidence="2">
    <location>
        <begin position="1"/>
        <end position="161"/>
    </location>
</feature>
<feature type="domain" description="OBG-type G" evidence="1">
    <location>
        <begin position="162"/>
        <end position="337"/>
    </location>
</feature>
<feature type="binding site" evidence="1">
    <location>
        <begin position="168"/>
        <end position="175"/>
    </location>
    <ligand>
        <name>GTP</name>
        <dbReference type="ChEBI" id="CHEBI:37565"/>
    </ligand>
</feature>
<feature type="binding site" evidence="1">
    <location>
        <position position="175"/>
    </location>
    <ligand>
        <name>Mg(2+)</name>
        <dbReference type="ChEBI" id="CHEBI:18420"/>
    </ligand>
</feature>
<feature type="binding site" evidence="1">
    <location>
        <begin position="193"/>
        <end position="197"/>
    </location>
    <ligand>
        <name>GTP</name>
        <dbReference type="ChEBI" id="CHEBI:37565"/>
    </ligand>
</feature>
<feature type="binding site" evidence="1">
    <location>
        <position position="195"/>
    </location>
    <ligand>
        <name>Mg(2+)</name>
        <dbReference type="ChEBI" id="CHEBI:18420"/>
    </ligand>
</feature>
<feature type="binding site" evidence="1">
    <location>
        <begin position="217"/>
        <end position="220"/>
    </location>
    <ligand>
        <name>GTP</name>
        <dbReference type="ChEBI" id="CHEBI:37565"/>
    </ligand>
</feature>
<feature type="binding site" evidence="1">
    <location>
        <begin position="290"/>
        <end position="293"/>
    </location>
    <ligand>
        <name>GTP</name>
        <dbReference type="ChEBI" id="CHEBI:37565"/>
    </ligand>
</feature>
<feature type="binding site" evidence="1">
    <location>
        <begin position="318"/>
        <end position="320"/>
    </location>
    <ligand>
        <name>GTP</name>
        <dbReference type="ChEBI" id="CHEBI:37565"/>
    </ligand>
</feature>